<protein>
    <recommendedName>
        <fullName>Guanine nucleotide-binding protein subunit gamma 1</fullName>
    </recommendedName>
    <alternativeName>
        <fullName>Ggamma-subunit 1</fullName>
    </alternativeName>
    <alternativeName>
        <fullName>Heterotrimeric G protein gamma-subunit 1</fullName>
        <shortName>AtAGG1</shortName>
    </alternativeName>
</protein>
<proteinExistence type="evidence at protein level"/>
<comment type="function">
    <text evidence="6 7 10 11 12 14">Guanine nucleotide-binding proteins (G proteins) are involved as a modulator or transducer in various transmembrane signaling systems. The beta and gamma chains are required for the GTPase activity, for replacement of GDP by GTP, and for G protein-effector interaction. Involved in the abscisic acid (ABA) and ethylene signaling pathways. Regulates acropetal transport of auxin (IAA) in roots and hypocotyls, and thus modulates root architecture (e.g. lateral root formation). The heterotrimeric G-protein controls defense responses to necrotrophic and vascular fungi probably by modulating cell wall-related genes expression; involved in resistance to fungal pathogens such as Alternaria brassicicola, Plectosphaerella cucumerina and Fusarium oxysporum.</text>
</comment>
<comment type="subunit">
    <text evidence="3 4 7 10 13">G proteins are composed of 3 units, alpha, beta and gamma. Interacts with the beta subunit GB1. The dimer GB1-GG1 interacts with NDL1, NDL2 and NDL3. Binds to NUDT7.</text>
</comment>
<comment type="interaction">
    <interactant intactId="EBI-1750878">
        <id>Q9FDX9</id>
    </interactant>
    <interactant intactId="EBI-1632851">
        <id>P49177</id>
        <label>GB1</label>
    </interactant>
    <organismsDiffer>false</organismsDiffer>
    <experiments>8</experiments>
</comment>
<comment type="interaction">
    <interactant intactId="EBI-1750878">
        <id>Q9FDX9</id>
    </interactant>
    <interactant intactId="EBI-1750986">
        <id>P93397</id>
    </interactant>
    <organismsDiffer>true</organismsDiffer>
    <experiments>4</experiments>
</comment>
<comment type="subcellular location">
    <subcellularLocation>
        <location evidence="4 5 8">Cell membrane</location>
    </subcellularLocation>
    <subcellularLocation>
        <location evidence="4 5">Golgi apparatus membrane</location>
    </subcellularLocation>
    <subcellularLocation>
        <location>Golgi apparatus</location>
        <location>trans-Golgi network membrane</location>
    </subcellularLocation>
    <subcellularLocation>
        <location>Cytoplasm</location>
    </subcellularLocation>
    <text evidence="4 13 16">Localized to the cell membrane when attached to beta subunit GB1 (Probable) (PubMed:17158913). Present in the cytoplasm when associated with NUDT7 (PubMed:22068106).</text>
</comment>
<comment type="alternative products">
    <event type="alternative initiation"/>
    <isoform>
        <id>Q9FDX9-1</id>
        <name>1</name>
        <sequence type="displayed"/>
    </isoform>
    <isoform>
        <id>Q9FDX9-2</id>
        <name>2</name>
        <sequence type="described" ref="VSP_044366"/>
    </isoform>
</comment>
<comment type="tissue specificity">
    <text evidence="3 7 9">Mostly expressed in seedlings (especially at the hypocotyl/root junction), young cauline leaves, open flowers, and floral stems, and, to a lower extent, in roots (restricted to the stele), rosette leaves (restricted to veins), siliques, and unopened floral buds. Also present in hydathods.</text>
</comment>
<comment type="developmental stage">
    <text evidence="7 9">In seedlings, first observed at the hypocotyl/root junction but later confined to the hypocotyl. In flowers, restricted to the stigma of mature flowers. In siliques, confined to the abscission zone.</text>
</comment>
<comment type="induction">
    <text evidence="7">Induced locally by Alternaria brassicicola but systemically by Fusarium oxysporum.</text>
</comment>
<comment type="disruption phenotype">
    <text evidence="7 10 11 12 14">Enhanced susceptibility to Alternaria brassicicola, Plectosphaerella cucumerina and Fusarium oxysporum associated with a disturbed expression of genes involved in cell wall metabolism (e.g. lower xylose content in cell walls). Reduced induction of the plant defensin gene PDF1.2, and decreased sensitivity to methyl jasmonate (MeJA). Hypersensitive to auxin-mediated induction of lateral roots, within the central cylinder, attenuating acropetally transported auxin signaling. Enhanced sensitivity to glucose and mannitol during seed germination. Abnormal roots architecture.</text>
</comment>
<accession>Q9FDX9</accession>
<accession>Q9LY73</accession>
<feature type="chain" id="PRO_0000419813" description="Guanine nucleotide-binding protein subunit gamma 1">
    <location>
        <begin position="1"/>
        <end position="95"/>
    </location>
</feature>
<feature type="propeptide" id="PRO_0000419814" description="Removed in mature form" evidence="1">
    <location>
        <begin position="96"/>
        <end position="98"/>
    </location>
</feature>
<feature type="domain" description="G protein gamma">
    <location>
        <begin position="19"/>
        <end position="98"/>
    </location>
</feature>
<feature type="region of interest" description="Regulates lipidation and cell membrane subcellular localization">
    <location>
        <begin position="88"/>
        <end position="94"/>
    </location>
</feature>
<feature type="coiled-coil region" evidence="2">
    <location>
        <begin position="20"/>
        <end position="50"/>
    </location>
</feature>
<feature type="modified residue" description="Cysteine methyl ester" evidence="15">
    <location>
        <position position="95"/>
    </location>
</feature>
<feature type="lipid moiety-binding region" description="S-palmitoyl cysteine" evidence="5">
    <location>
        <position position="93"/>
    </location>
</feature>
<feature type="lipid moiety-binding region" description="S-farnesyl cysteine" evidence="5">
    <location>
        <position position="95"/>
    </location>
</feature>
<feature type="splice variant" id="VSP_044366" description="In isoform 2." evidence="15">
    <original>M</original>
    <variation>MEGKSRFESERERLRRQFKLVRTKTRLSLTLSDLRPASERM</variation>
    <location>
        <position position="1"/>
    </location>
</feature>
<feature type="mutagenesis site" description="Plasma membrane only localization, probably by increased lipidation." evidence="5">
    <original>NGGEGCR</original>
    <variation>KEAKRCG</variation>
    <location>
        <begin position="88"/>
        <end position="94"/>
    </location>
</feature>
<feature type="mutagenesis site" description="Normal subcellular localization." evidence="5">
    <original>C</original>
    <variation>S</variation>
    <location>
        <position position="93"/>
    </location>
</feature>
<feature type="mutagenesis site" description="No prenylation and loss of cell membrane and Golgi apparatus attachment leading to cytoplasmic subcellular localization." evidence="5">
    <original>C</original>
    <variation>S</variation>
    <location>
        <position position="95"/>
    </location>
</feature>
<keyword id="KW-0024">Alternative initiation</keyword>
<keyword id="KW-1003">Cell membrane</keyword>
<keyword id="KW-0175">Coiled coil</keyword>
<keyword id="KW-0963">Cytoplasm</keyword>
<keyword id="KW-0333">Golgi apparatus</keyword>
<keyword id="KW-0449">Lipoprotein</keyword>
<keyword id="KW-0472">Membrane</keyword>
<keyword id="KW-0488">Methylation</keyword>
<keyword id="KW-0564">Palmitate</keyword>
<keyword id="KW-0611">Plant defense</keyword>
<keyword id="KW-0636">Prenylation</keyword>
<keyword id="KW-1185">Reference proteome</keyword>
<keyword id="KW-0807">Transducer</keyword>
<gene>
    <name type="primary">GG1</name>
    <name type="synonym">AGG1</name>
    <name type="ordered locus">At3g63420</name>
    <name type="ORF">MAA21.50</name>
</gene>
<sequence>MREETVVYEQEESVSHGGGKHRILAELARVEQEVAFLEKELKEVENTDIVSTVCEELLSVIEKGPDPLLPLTNGPLNLGWDRWFEGPNGGEGCRCLIL</sequence>
<reference key="1">
    <citation type="journal article" date="2000" name="Proc. Natl. Acad. Sci. U.S.A.">
        <title>Completing the heterotrimer: isolation and characterization of an Arabidopsis thaliana G protein gamma-subunit cDNA.</title>
        <authorList>
            <person name="Mason M.G."/>
            <person name="Botella J.R."/>
        </authorList>
    </citation>
    <scope>NUCLEOTIDE SEQUENCE [GENOMIC DNA / MRNA] (ISOFORM 1)</scope>
    <scope>INTERACTION WITH GB1</scope>
    <scope>TISSUE SPECIFICITY</scope>
    <source>
        <strain>cv. Columbia</strain>
    </source>
</reference>
<reference key="2">
    <citation type="journal article" date="2000" name="Nature">
        <title>Sequence and analysis of chromosome 3 of the plant Arabidopsis thaliana.</title>
        <authorList>
            <person name="Salanoubat M."/>
            <person name="Lemcke K."/>
            <person name="Rieger M."/>
            <person name="Ansorge W."/>
            <person name="Unseld M."/>
            <person name="Fartmann B."/>
            <person name="Valle G."/>
            <person name="Bloecker H."/>
            <person name="Perez-Alonso M."/>
            <person name="Obermaier B."/>
            <person name="Delseny M."/>
            <person name="Boutry M."/>
            <person name="Grivell L.A."/>
            <person name="Mache R."/>
            <person name="Puigdomenech P."/>
            <person name="De Simone V."/>
            <person name="Choisne N."/>
            <person name="Artiguenave F."/>
            <person name="Robert C."/>
            <person name="Brottier P."/>
            <person name="Wincker P."/>
            <person name="Cattolico L."/>
            <person name="Weissenbach J."/>
            <person name="Saurin W."/>
            <person name="Quetier F."/>
            <person name="Schaefer M."/>
            <person name="Mueller-Auer S."/>
            <person name="Gabel C."/>
            <person name="Fuchs M."/>
            <person name="Benes V."/>
            <person name="Wurmbach E."/>
            <person name="Drzonek H."/>
            <person name="Erfle H."/>
            <person name="Jordan N."/>
            <person name="Bangert S."/>
            <person name="Wiedelmann R."/>
            <person name="Kranz H."/>
            <person name="Voss H."/>
            <person name="Holland R."/>
            <person name="Brandt P."/>
            <person name="Nyakatura G."/>
            <person name="Vezzi A."/>
            <person name="D'Angelo M."/>
            <person name="Pallavicini A."/>
            <person name="Toppo S."/>
            <person name="Simionati B."/>
            <person name="Conrad A."/>
            <person name="Hornischer K."/>
            <person name="Kauer G."/>
            <person name="Loehnert T.-H."/>
            <person name="Nordsiek G."/>
            <person name="Reichelt J."/>
            <person name="Scharfe M."/>
            <person name="Schoen O."/>
            <person name="Bargues M."/>
            <person name="Terol J."/>
            <person name="Climent J."/>
            <person name="Navarro P."/>
            <person name="Collado C."/>
            <person name="Perez-Perez A."/>
            <person name="Ottenwaelder B."/>
            <person name="Duchemin D."/>
            <person name="Cooke R."/>
            <person name="Laudie M."/>
            <person name="Berger-Llauro C."/>
            <person name="Purnelle B."/>
            <person name="Masuy D."/>
            <person name="de Haan M."/>
            <person name="Maarse A.C."/>
            <person name="Alcaraz J.-P."/>
            <person name="Cottet A."/>
            <person name="Casacuberta E."/>
            <person name="Monfort A."/>
            <person name="Argiriou A."/>
            <person name="Flores M."/>
            <person name="Liguori R."/>
            <person name="Vitale D."/>
            <person name="Mannhaupt G."/>
            <person name="Haase D."/>
            <person name="Schoof H."/>
            <person name="Rudd S."/>
            <person name="Zaccaria P."/>
            <person name="Mewes H.-W."/>
            <person name="Mayer K.F.X."/>
            <person name="Kaul S."/>
            <person name="Town C.D."/>
            <person name="Koo H.L."/>
            <person name="Tallon L.J."/>
            <person name="Jenkins J."/>
            <person name="Rooney T."/>
            <person name="Rizzo M."/>
            <person name="Walts A."/>
            <person name="Utterback T."/>
            <person name="Fujii C.Y."/>
            <person name="Shea T.P."/>
            <person name="Creasy T.H."/>
            <person name="Haas B."/>
            <person name="Maiti R."/>
            <person name="Wu D."/>
            <person name="Peterson J."/>
            <person name="Van Aken S."/>
            <person name="Pai G."/>
            <person name="Militscher J."/>
            <person name="Sellers P."/>
            <person name="Gill J.E."/>
            <person name="Feldblyum T.V."/>
            <person name="Preuss D."/>
            <person name="Lin X."/>
            <person name="Nierman W.C."/>
            <person name="Salzberg S.L."/>
            <person name="White O."/>
            <person name="Venter J.C."/>
            <person name="Fraser C.M."/>
            <person name="Kaneko T."/>
            <person name="Nakamura Y."/>
            <person name="Sato S."/>
            <person name="Kato T."/>
            <person name="Asamizu E."/>
            <person name="Sasamoto S."/>
            <person name="Kimura T."/>
            <person name="Idesawa K."/>
            <person name="Kawashima K."/>
            <person name="Kishida Y."/>
            <person name="Kiyokawa C."/>
            <person name="Kohara M."/>
            <person name="Matsumoto M."/>
            <person name="Matsuno A."/>
            <person name="Muraki A."/>
            <person name="Nakayama S."/>
            <person name="Nakazaki N."/>
            <person name="Shinpo S."/>
            <person name="Takeuchi C."/>
            <person name="Wada T."/>
            <person name="Watanabe A."/>
            <person name="Yamada M."/>
            <person name="Yasuda M."/>
            <person name="Tabata S."/>
        </authorList>
    </citation>
    <scope>NUCLEOTIDE SEQUENCE [LARGE SCALE GENOMIC DNA]</scope>
    <source>
        <strain>cv. Columbia</strain>
    </source>
</reference>
<reference key="3">
    <citation type="journal article" date="2017" name="Plant J.">
        <title>Araport11: a complete reannotation of the Arabidopsis thaliana reference genome.</title>
        <authorList>
            <person name="Cheng C.Y."/>
            <person name="Krishnakumar V."/>
            <person name="Chan A.P."/>
            <person name="Thibaud-Nissen F."/>
            <person name="Schobel S."/>
            <person name="Town C.D."/>
        </authorList>
    </citation>
    <scope>GENOME REANNOTATION</scope>
    <source>
        <strain>cv. Columbia</strain>
    </source>
</reference>
<reference key="4">
    <citation type="submission" date="2004-09" db="EMBL/GenBank/DDBJ databases">
        <title>Large-scale analysis of RIKEN Arabidopsis full-length (RAFL) cDNAs.</title>
        <authorList>
            <person name="Totoki Y."/>
            <person name="Seki M."/>
            <person name="Ishida J."/>
            <person name="Nakajima M."/>
            <person name="Enju A."/>
            <person name="Kamiya A."/>
            <person name="Narusaka M."/>
            <person name="Shin-i T."/>
            <person name="Nakagawa M."/>
            <person name="Sakamoto N."/>
            <person name="Oishi K."/>
            <person name="Kohara Y."/>
            <person name="Kobayashi M."/>
            <person name="Toyoda A."/>
            <person name="Sakaki Y."/>
            <person name="Sakurai T."/>
            <person name="Iida K."/>
            <person name="Akiyama K."/>
            <person name="Satou M."/>
            <person name="Toyoda T."/>
            <person name="Konagaya A."/>
            <person name="Carninci P."/>
            <person name="Kawai J."/>
            <person name="Hayashizaki Y."/>
            <person name="Shinozaki K."/>
        </authorList>
    </citation>
    <scope>NUCLEOTIDE SEQUENCE [LARGE SCALE MRNA] (ISOFORM 1)</scope>
    <source>
        <strain>cv. Columbia</strain>
    </source>
</reference>
<reference key="5">
    <citation type="submission" date="2006-02" db="EMBL/GenBank/DDBJ databases">
        <title>Arabidopsis ORF clones.</title>
        <authorList>
            <person name="Shinn P."/>
            <person name="Chen H."/>
            <person name="Kim C.J."/>
            <person name="Ecker J.R."/>
        </authorList>
    </citation>
    <scope>NUCLEOTIDE SEQUENCE [LARGE SCALE MRNA] (ISOFORM 1)</scope>
    <source>
        <strain>cv. Columbia</strain>
    </source>
</reference>
<reference key="6">
    <citation type="journal article" date="2006" name="J. Cell Sci.">
        <title>Plant G protein heterotrimers require dual lipidation motifs of Galpha and Ggamma and do not dissociate upon activation.</title>
        <authorList>
            <person name="Adjobo-Hermans M.J.W."/>
            <person name="Goedhart J."/>
            <person name="Gadella T.W.J. Jr."/>
        </authorList>
    </citation>
    <scope>SUBUNIT</scope>
    <scope>SUBCELLULAR LOCATION</scope>
    <scope>INTERACTION WITH GB1</scope>
</reference>
<reference key="7">
    <citation type="journal article" date="2007" name="Gene">
        <title>Over-expression of a truncated Arabidopsis thaliana heterotrimeric G protein gamma subunit results in a phenotype similar to alpha and beta subunit knockouts.</title>
        <authorList>
            <person name="Chakravorty D."/>
            <person name="Botella J.R."/>
        </authorList>
    </citation>
    <scope>FUNCTION</scope>
    <source>
        <strain>cv. Columbia</strain>
    </source>
</reference>
<reference key="8">
    <citation type="journal article" date="2007" name="Mol. Cell. Proteomics">
        <title>A high content in lipid-modified peripheral proteins and integral receptor kinases features in the arabidopsis plasma membrane proteome.</title>
        <authorList>
            <person name="Marmagne A."/>
            <person name="Ferro M."/>
            <person name="Meinnel T."/>
            <person name="Bruley C."/>
            <person name="Kuhn L."/>
            <person name="Garin J."/>
            <person name="Barbier-Brygoo H."/>
            <person name="Ephritikhine G."/>
        </authorList>
    </citation>
    <scope>IDENTIFICATION BY MASS SPECTROMETRY</scope>
    <scope>SUBCELLULAR LOCATION [LARGE SCALE ANALYSIS]</scope>
</reference>
<reference key="9">
    <citation type="journal article" date="2007" name="Plant Cell">
        <title>Heterotrimeric G protein gamma subunits provide functional selectivity in Gbetagamma dimer signaling in Arabidopsis.</title>
        <authorList>
            <person name="Trusov Y."/>
            <person name="Rookes J.E."/>
            <person name="Tilbrook K."/>
            <person name="Chakravorty D."/>
            <person name="Mason M.G."/>
            <person name="Anderson D."/>
            <person name="Chen J.-G."/>
            <person name="Jones A.M."/>
            <person name="Botella J.R."/>
        </authorList>
    </citation>
    <scope>FUNCTION</scope>
    <scope>DISRUPTION PHENOTYPE</scope>
    <scope>SUBUNIT</scope>
    <scope>TISSUE SPECIFICITY</scope>
    <scope>DEVELOPMENTAL STAGE</scope>
    <scope>INDUCTION BY ALTERNARIA BRASSICICOLA AND FUSARIUM OXYSPORUM</scope>
    <source>
        <strain>cv. Columbia</strain>
        <strain>cv. Wassilewskija</strain>
    </source>
</reference>
<reference key="10">
    <citation type="journal article" date="2007" name="Plant Physiol.">
        <title>Dual lipid modification of Arabidopsis Ggamma-subunits is required for efficient plasma membrane targeting.</title>
        <authorList>
            <person name="Zeng Q."/>
            <person name="Wang X."/>
            <person name="Running M.P."/>
        </authorList>
    </citation>
    <scope>SUBCELLULAR LOCATION</scope>
    <scope>PALMITOYLATION AT CYS-93</scope>
    <scope>ISOPRENYLATION AT CYS-95</scope>
    <scope>MUTAGENESIS OF 88-ASN--ARG-94; CYS-93 AND CYS-95</scope>
</reference>
<reference key="11">
    <citation type="journal article" date="2008" name="Plant Physiol.">
        <title>Ggamma1 + Ggamma2 not equal to Gbeta: heterotrimeric G protein Ggamma-deficient mutants do not recapitulate all phenotypes of Gbeta-deficient mutants.</title>
        <authorList>
            <person name="Trusov Y."/>
            <person name="Zhang W."/>
            <person name="Assmann S.M."/>
            <person name="Botella J.R."/>
        </authorList>
    </citation>
    <scope>TISSUE SPECIFICITY</scope>
    <scope>DEVELOPMENTAL STAGE</scope>
    <source>
        <strain>cv. Columbia</strain>
    </source>
</reference>
<reference key="12">
    <citation type="journal article" date="2009" name="Plant Cell">
        <title>Arabidopsis N-MYC DOWNREGULATED-LIKE1, a positive regulator of auxin transport in a G protein-mediated pathway.</title>
        <authorList>
            <person name="Mudgil Y."/>
            <person name="Uhrig J.F."/>
            <person name="Zhou J."/>
            <person name="Temple B."/>
            <person name="Jiang K."/>
            <person name="Jones A.M."/>
        </authorList>
    </citation>
    <scope>FUNCTION</scope>
    <scope>DISRUPTION PHENOTYPE</scope>
    <scope>INTERACTION WITH NDL1; NDL2 AND NDL3</scope>
    <source>
        <strain>cv. Columbia</strain>
    </source>
</reference>
<reference key="13">
    <citation type="journal article" date="2010" name="PLoS ONE">
        <title>Glucose attenuation of auxin-mediated bimodality in lateral root formation is partly coupled by the heterotrimeric G protein complex.</title>
        <authorList>
            <person name="Booker K.S."/>
            <person name="Schwarz J."/>
            <person name="Garrett M.B."/>
            <person name="Jones A.M."/>
        </authorList>
    </citation>
    <scope>FUNCTION</scope>
    <scope>DISRUPTION PHENOTYPE</scope>
</reference>
<reference key="14">
    <citation type="journal article" date="2011" name="Acta Biochim. Pol.">
        <title>Arabidopsis thaliana Nudix hydrolase AtNUDT7 forms complexes with the regulatory RACK1A protein and Ggamma subunits of the signal transducing heterotrimeric G protein.</title>
        <authorList>
            <person name="Olejnik K."/>
            <person name="Bucholc M."/>
            <person name="Anielska-Mazur A."/>
            <person name="Lipko A."/>
            <person name="Kujawa M."/>
            <person name="Modzelan M."/>
            <person name="Augustyn A."/>
            <person name="Kraszewska E."/>
        </authorList>
    </citation>
    <scope>INTERACTION WITH NUDT7</scope>
    <scope>SUBCELLULAR LOCATION</scope>
</reference>
<reference key="15">
    <citation type="journal article" date="2012" name="J. Plant Physiol.">
        <title>Ggamma1+Ggamma2+Ggamma3=Gbeta: the search for heterotrimeric G-protein gamma subunits in Arabidopsis is over.</title>
        <authorList>
            <person name="Thung L."/>
            <person name="Trusov Y."/>
            <person name="Chakravorty D."/>
            <person name="Botella J.R."/>
        </authorList>
    </citation>
    <scope>FUNCTION</scope>
    <scope>DISRUPTION PHENOTYPE</scope>
    <source>
        <strain>cv. Columbia</strain>
    </source>
</reference>
<reference key="16">
    <citation type="journal article" date="2012" name="Mol. Plant">
        <title>Arabidopsis heterotrimeric G-protein regulates cell wall defense and resistance to necrotrophic fungi.</title>
        <authorList>
            <person name="Delgado-Cerezo M."/>
            <person name="Sanchez-Rodriguez C."/>
            <person name="Escudero V."/>
            <person name="Miedes E."/>
            <person name="Fernandez P.V."/>
            <person name="Jorda L."/>
            <person name="Hernandez-Blanco C."/>
            <person name="Sanchez-Vallet A."/>
            <person name="Bednarek P."/>
            <person name="Schulze-Lefert P."/>
            <person name="Somerville S."/>
            <person name="Estevez J.M."/>
            <person name="Persson S."/>
            <person name="Molina A."/>
        </authorList>
    </citation>
    <scope>FUNCTION</scope>
    <scope>DISRUPTION PHENOTYPE</scope>
    <source>
        <strain>cv. Columbia</strain>
    </source>
</reference>
<evidence type="ECO:0000250" key="1"/>
<evidence type="ECO:0000255" key="2"/>
<evidence type="ECO:0000269" key="3">
    <source>
    </source>
</evidence>
<evidence type="ECO:0000269" key="4">
    <source>
    </source>
</evidence>
<evidence type="ECO:0000269" key="5">
    <source>
    </source>
</evidence>
<evidence type="ECO:0000269" key="6">
    <source>
    </source>
</evidence>
<evidence type="ECO:0000269" key="7">
    <source>
    </source>
</evidence>
<evidence type="ECO:0000269" key="8">
    <source>
    </source>
</evidence>
<evidence type="ECO:0000269" key="9">
    <source>
    </source>
</evidence>
<evidence type="ECO:0000269" key="10">
    <source>
    </source>
</evidence>
<evidence type="ECO:0000269" key="11">
    <source>
    </source>
</evidence>
<evidence type="ECO:0000269" key="12">
    <source>
    </source>
</evidence>
<evidence type="ECO:0000269" key="13">
    <source>
    </source>
</evidence>
<evidence type="ECO:0000269" key="14">
    <source>
    </source>
</evidence>
<evidence type="ECO:0000305" key="15"/>
<evidence type="ECO:0000305" key="16">
    <source>
    </source>
</evidence>
<name>GG1_ARATH</name>
<dbReference type="EMBL" id="AF283673">
    <property type="protein sequence ID" value="AAG45959.1"/>
    <property type="molecule type" value="mRNA"/>
</dbReference>
<dbReference type="EMBL" id="AF283674">
    <property type="protein sequence ID" value="AAG45960.1"/>
    <property type="molecule type" value="Genomic_DNA"/>
</dbReference>
<dbReference type="EMBL" id="AL163818">
    <property type="protein sequence ID" value="CAB87795.1"/>
    <property type="molecule type" value="Genomic_DNA"/>
</dbReference>
<dbReference type="EMBL" id="CP002686">
    <property type="protein sequence ID" value="AEE80479.1"/>
    <property type="molecule type" value="Genomic_DNA"/>
</dbReference>
<dbReference type="EMBL" id="CP002686">
    <property type="protein sequence ID" value="AEE80480.1"/>
    <property type="molecule type" value="Genomic_DNA"/>
</dbReference>
<dbReference type="EMBL" id="CP002686">
    <property type="protein sequence ID" value="ANM63533.1"/>
    <property type="molecule type" value="Genomic_DNA"/>
</dbReference>
<dbReference type="EMBL" id="AK175815">
    <property type="protein sequence ID" value="BAD43578.1"/>
    <property type="molecule type" value="mRNA"/>
</dbReference>
<dbReference type="EMBL" id="BT024540">
    <property type="protein sequence ID" value="ABD38879.1"/>
    <property type="molecule type" value="mRNA"/>
</dbReference>
<dbReference type="PIR" id="T49183">
    <property type="entry name" value="T49183"/>
</dbReference>
<dbReference type="RefSeq" id="NP_001325615.1">
    <molecule id="Q9FDX9-2"/>
    <property type="nucleotide sequence ID" value="NM_001340213.1"/>
</dbReference>
<dbReference type="RefSeq" id="NP_567147.1">
    <molecule id="Q9FDX9-1"/>
    <property type="nucleotide sequence ID" value="NM_116207.3"/>
</dbReference>
<dbReference type="RefSeq" id="NP_850741.1">
    <molecule id="Q9FDX9-1"/>
    <property type="nucleotide sequence ID" value="NM_180410.1"/>
</dbReference>
<dbReference type="SMR" id="Q9FDX9"/>
<dbReference type="BioGRID" id="10831">
    <property type="interactions" value="12"/>
</dbReference>
<dbReference type="FunCoup" id="Q9FDX9">
    <property type="interactions" value="12"/>
</dbReference>
<dbReference type="IntAct" id="Q9FDX9">
    <property type="interactions" value="5"/>
</dbReference>
<dbReference type="STRING" id="3702.Q9FDX9"/>
<dbReference type="TCDB" id="8.A.92.1.2">
    <property type="family name" value="the g-protein AlphaBetaGama complex (gpc) family"/>
</dbReference>
<dbReference type="SwissPalm" id="Q9FDX9"/>
<dbReference type="PaxDb" id="3702-AT3G63420.1"/>
<dbReference type="ProteomicsDB" id="221831">
    <molecule id="Q9FDX9-1"/>
</dbReference>
<dbReference type="EnsemblPlants" id="AT3G63420.1">
    <molecule id="Q9FDX9-1"/>
    <property type="protein sequence ID" value="AT3G63420.1"/>
    <property type="gene ID" value="AT3G63420"/>
</dbReference>
<dbReference type="EnsemblPlants" id="AT3G63420.2">
    <molecule id="Q9FDX9-1"/>
    <property type="protein sequence ID" value="AT3G63420.2"/>
    <property type="gene ID" value="AT3G63420"/>
</dbReference>
<dbReference type="EnsemblPlants" id="AT3G63420.3">
    <molecule id="Q9FDX9-2"/>
    <property type="protein sequence ID" value="AT3G63420.3"/>
    <property type="gene ID" value="AT3G63420"/>
</dbReference>
<dbReference type="GeneID" id="825517"/>
<dbReference type="Gramene" id="AT3G63420.1">
    <molecule id="Q9FDX9-1"/>
    <property type="protein sequence ID" value="AT3G63420.1"/>
    <property type="gene ID" value="AT3G63420"/>
</dbReference>
<dbReference type="Gramene" id="AT3G63420.2">
    <molecule id="Q9FDX9-1"/>
    <property type="protein sequence ID" value="AT3G63420.2"/>
    <property type="gene ID" value="AT3G63420"/>
</dbReference>
<dbReference type="Gramene" id="AT3G63420.3">
    <molecule id="Q9FDX9-2"/>
    <property type="protein sequence ID" value="AT3G63420.3"/>
    <property type="gene ID" value="AT3G63420"/>
</dbReference>
<dbReference type="KEGG" id="ath:AT3G63420"/>
<dbReference type="Araport" id="AT3G63420"/>
<dbReference type="TAIR" id="AT3G63420">
    <property type="gene designation" value="GG1"/>
</dbReference>
<dbReference type="eggNOG" id="ENOG502S439">
    <property type="taxonomic scope" value="Eukaryota"/>
</dbReference>
<dbReference type="HOGENOM" id="CLU_105699_2_0_1"/>
<dbReference type="InParanoid" id="Q9FDX9"/>
<dbReference type="PRO" id="PR:Q9FDX9"/>
<dbReference type="Proteomes" id="UP000006548">
    <property type="component" value="Chromosome 3"/>
</dbReference>
<dbReference type="ExpressionAtlas" id="Q9FDX9">
    <property type="expression patterns" value="baseline and differential"/>
</dbReference>
<dbReference type="GO" id="GO:0005737">
    <property type="term" value="C:cytoplasm"/>
    <property type="evidence" value="ECO:0000314"/>
    <property type="project" value="UniProtKB"/>
</dbReference>
<dbReference type="GO" id="GO:0005794">
    <property type="term" value="C:Golgi apparatus"/>
    <property type="evidence" value="ECO:0000314"/>
    <property type="project" value="UniProtKB"/>
</dbReference>
<dbReference type="GO" id="GO:0000139">
    <property type="term" value="C:Golgi membrane"/>
    <property type="evidence" value="ECO:0007669"/>
    <property type="project" value="UniProtKB-SubCell"/>
</dbReference>
<dbReference type="GO" id="GO:0005834">
    <property type="term" value="C:heterotrimeric G-protein complex"/>
    <property type="evidence" value="ECO:0000314"/>
    <property type="project" value="UniProtKB"/>
</dbReference>
<dbReference type="GO" id="GO:0005886">
    <property type="term" value="C:plasma membrane"/>
    <property type="evidence" value="ECO:0000314"/>
    <property type="project" value="UniProtKB"/>
</dbReference>
<dbReference type="GO" id="GO:0005525">
    <property type="term" value="F:GTP binding"/>
    <property type="evidence" value="ECO:0000250"/>
    <property type="project" value="TAIR"/>
</dbReference>
<dbReference type="GO" id="GO:0010541">
    <property type="term" value="P:acropetal auxin transport"/>
    <property type="evidence" value="ECO:0000315"/>
    <property type="project" value="TAIR"/>
</dbReference>
<dbReference type="GO" id="GO:0050832">
    <property type="term" value="P:defense response to fungus"/>
    <property type="evidence" value="ECO:0000315"/>
    <property type="project" value="TAIR"/>
</dbReference>
<dbReference type="GO" id="GO:0007186">
    <property type="term" value="P:G protein-coupled receptor signaling pathway"/>
    <property type="evidence" value="ECO:0007669"/>
    <property type="project" value="InterPro"/>
</dbReference>
<dbReference type="GO" id="GO:0048527">
    <property type="term" value="P:lateral root development"/>
    <property type="evidence" value="ECO:0000315"/>
    <property type="project" value="TAIR"/>
</dbReference>
<dbReference type="GO" id="GO:0018345">
    <property type="term" value="P:protein palmitoylation"/>
    <property type="evidence" value="ECO:0000250"/>
    <property type="project" value="UniProtKB"/>
</dbReference>
<dbReference type="GO" id="GO:0018342">
    <property type="term" value="P:protein prenylation"/>
    <property type="evidence" value="ECO:0000250"/>
    <property type="project" value="UniProtKB"/>
</dbReference>
<dbReference type="GO" id="GO:0009845">
    <property type="term" value="P:seed germination"/>
    <property type="evidence" value="ECO:0000315"/>
    <property type="project" value="TAIR"/>
</dbReference>
<dbReference type="InterPro" id="IPR015898">
    <property type="entry name" value="G-protein_gamma-like_dom"/>
</dbReference>
<dbReference type="InterPro" id="IPR045878">
    <property type="entry name" value="GG1/2"/>
</dbReference>
<dbReference type="PANTHER" id="PTHR35129">
    <property type="entry name" value="GUANINE NUCLEOTIDE-BINDING PROTEIN SUBUNIT GAMMA 1"/>
    <property type="match status" value="1"/>
</dbReference>
<dbReference type="PANTHER" id="PTHR35129:SF1">
    <property type="entry name" value="GUANINE NUCLEOTIDE-BINDING PROTEIN SUBUNIT GAMMA 1"/>
    <property type="match status" value="1"/>
</dbReference>
<dbReference type="Pfam" id="PF00631">
    <property type="entry name" value="G-gamma"/>
    <property type="match status" value="1"/>
</dbReference>
<dbReference type="SMART" id="SM01224">
    <property type="entry name" value="G_gamma"/>
    <property type="match status" value="1"/>
</dbReference>
<organism>
    <name type="scientific">Arabidopsis thaliana</name>
    <name type="common">Mouse-ear cress</name>
    <dbReference type="NCBI Taxonomy" id="3702"/>
    <lineage>
        <taxon>Eukaryota</taxon>
        <taxon>Viridiplantae</taxon>
        <taxon>Streptophyta</taxon>
        <taxon>Embryophyta</taxon>
        <taxon>Tracheophyta</taxon>
        <taxon>Spermatophyta</taxon>
        <taxon>Magnoliopsida</taxon>
        <taxon>eudicotyledons</taxon>
        <taxon>Gunneridae</taxon>
        <taxon>Pentapetalae</taxon>
        <taxon>rosids</taxon>
        <taxon>malvids</taxon>
        <taxon>Brassicales</taxon>
        <taxon>Brassicaceae</taxon>
        <taxon>Camelineae</taxon>
        <taxon>Arabidopsis</taxon>
    </lineage>
</organism>